<proteinExistence type="inferred from homology"/>
<comment type="subcellular location">
    <subcellularLocation>
        <location evidence="1">Cell inner membrane</location>
        <topology evidence="1">Multi-pass membrane protein</topology>
    </subcellularLocation>
</comment>
<comment type="similarity">
    <text evidence="1">Belongs to the major facilitator superfamily. YcaD (TC 2.A.1.26) family.</text>
</comment>
<organism>
    <name type="scientific">Salmonella choleraesuis (strain SC-B67)</name>
    <dbReference type="NCBI Taxonomy" id="321314"/>
    <lineage>
        <taxon>Bacteria</taxon>
        <taxon>Pseudomonadati</taxon>
        <taxon>Pseudomonadota</taxon>
        <taxon>Gammaproteobacteria</taxon>
        <taxon>Enterobacterales</taxon>
        <taxon>Enterobacteriaceae</taxon>
        <taxon>Salmonella</taxon>
    </lineage>
</organism>
<feature type="chain" id="PRO_1000065494" description="Uncharacterized MFS-type transporter YcaD">
    <location>
        <begin position="1"/>
        <end position="382"/>
    </location>
</feature>
<feature type="transmembrane region" description="Helical" evidence="1">
    <location>
        <begin position="8"/>
        <end position="28"/>
    </location>
</feature>
<feature type="transmembrane region" description="Helical" evidence="1">
    <location>
        <begin position="45"/>
        <end position="65"/>
    </location>
</feature>
<feature type="transmembrane region" description="Helical" evidence="1">
    <location>
        <begin position="75"/>
        <end position="95"/>
    </location>
</feature>
<feature type="transmembrane region" description="Helical" evidence="1">
    <location>
        <begin position="102"/>
        <end position="122"/>
    </location>
</feature>
<feature type="transmembrane region" description="Helical" evidence="1">
    <location>
        <begin position="131"/>
        <end position="151"/>
    </location>
</feature>
<feature type="transmembrane region" description="Helical" evidence="1">
    <location>
        <begin position="157"/>
        <end position="177"/>
    </location>
</feature>
<feature type="transmembrane region" description="Helical" evidence="1">
    <location>
        <begin position="204"/>
        <end position="224"/>
    </location>
</feature>
<feature type="transmembrane region" description="Helical" evidence="1">
    <location>
        <begin position="231"/>
        <end position="251"/>
    </location>
</feature>
<feature type="transmembrane region" description="Helical" evidence="1">
    <location>
        <begin position="270"/>
        <end position="290"/>
    </location>
</feature>
<feature type="transmembrane region" description="Helical" evidence="1">
    <location>
        <begin position="291"/>
        <end position="311"/>
    </location>
</feature>
<feature type="transmembrane region" description="Helical" evidence="1">
    <location>
        <begin position="325"/>
        <end position="345"/>
    </location>
</feature>
<feature type="transmembrane region" description="Helical" evidence="1">
    <location>
        <begin position="349"/>
        <end position="369"/>
    </location>
</feature>
<sequence>MSTYTRPVMLLLCGLLLLTLAIAVLNTLVPLWLAQANLPTWQVGMVSSSYFTGNLVGTLFTGYLIKRIGFNRSYYLASLIFAAGCVGLGVMVGFWSWMSWRFIAGIGCAMIWVVVESALMCSGTSHNRGRLLAAYMMVYYMGTFLGQLLVSKVSGELLHVLPWVTGMILAGILPLLFTRIVNQQTQTRHSSSISAMLKLRQARLGVNGCIISGIVLGSLYGLMPLYLKHQGMANASIGFWMAVLVSAGILGQWPMGRLADKFGRLLVLRVQVFVVILGSIAMLTQAAMAPALFILGAAGFTLYPVAMAWACEKVEHHQLVAMNQALLLSYTVGSLLGPSFAAMLMQNYSDNLLFIMIASVSFIYLLMLLRNAGQTPNPVAHI</sequence>
<gene>
    <name evidence="1" type="primary">ycaD</name>
    <name type="ordered locus">SCH_0922</name>
</gene>
<evidence type="ECO:0000255" key="1">
    <source>
        <dbReference type="HAMAP-Rule" id="MF_01149"/>
    </source>
</evidence>
<protein>
    <recommendedName>
        <fullName evidence="1">Uncharacterized MFS-type transporter YcaD</fullName>
    </recommendedName>
</protein>
<keyword id="KW-0997">Cell inner membrane</keyword>
<keyword id="KW-1003">Cell membrane</keyword>
<keyword id="KW-0472">Membrane</keyword>
<keyword id="KW-0812">Transmembrane</keyword>
<keyword id="KW-1133">Transmembrane helix</keyword>
<keyword id="KW-0813">Transport</keyword>
<dbReference type="EMBL" id="AE017220">
    <property type="protein sequence ID" value="AAX64828.1"/>
    <property type="molecule type" value="Genomic_DNA"/>
</dbReference>
<dbReference type="RefSeq" id="WP_000109274.1">
    <property type="nucleotide sequence ID" value="NC_006905.1"/>
</dbReference>
<dbReference type="SMR" id="Q57R33"/>
<dbReference type="KEGG" id="sec:SCH_0922"/>
<dbReference type="HOGENOM" id="CLU_035018_1_2_6"/>
<dbReference type="Proteomes" id="UP000000538">
    <property type="component" value="Chromosome"/>
</dbReference>
<dbReference type="GO" id="GO:0005886">
    <property type="term" value="C:plasma membrane"/>
    <property type="evidence" value="ECO:0007669"/>
    <property type="project" value="UniProtKB-SubCell"/>
</dbReference>
<dbReference type="GO" id="GO:0022857">
    <property type="term" value="F:transmembrane transporter activity"/>
    <property type="evidence" value="ECO:0007669"/>
    <property type="project" value="UniProtKB-UniRule"/>
</dbReference>
<dbReference type="CDD" id="cd17477">
    <property type="entry name" value="MFS_YcaD_like"/>
    <property type="match status" value="1"/>
</dbReference>
<dbReference type="FunFam" id="1.20.1250.20:FF:000041">
    <property type="entry name" value="Uncharacterized MFS-type transporter YcaD"/>
    <property type="match status" value="1"/>
</dbReference>
<dbReference type="FunFam" id="1.20.1250.20:FF:000066">
    <property type="entry name" value="Uncharacterized MFS-type transporter YcaD"/>
    <property type="match status" value="1"/>
</dbReference>
<dbReference type="Gene3D" id="1.20.1250.20">
    <property type="entry name" value="MFS general substrate transporter like domains"/>
    <property type="match status" value="2"/>
</dbReference>
<dbReference type="HAMAP" id="MF_01149">
    <property type="entry name" value="MFS_YcaD"/>
    <property type="match status" value="1"/>
</dbReference>
<dbReference type="InterPro" id="IPR011701">
    <property type="entry name" value="MFS"/>
</dbReference>
<dbReference type="InterPro" id="IPR020846">
    <property type="entry name" value="MFS_dom"/>
</dbReference>
<dbReference type="InterPro" id="IPR036259">
    <property type="entry name" value="MFS_trans_sf"/>
</dbReference>
<dbReference type="InterPro" id="IPR023745">
    <property type="entry name" value="MFS_YcaD"/>
</dbReference>
<dbReference type="InterPro" id="IPR047200">
    <property type="entry name" value="MFS_YcaD-like"/>
</dbReference>
<dbReference type="NCBIfam" id="NF002962">
    <property type="entry name" value="PRK03633.1"/>
    <property type="match status" value="1"/>
</dbReference>
<dbReference type="PANTHER" id="PTHR23521">
    <property type="entry name" value="TRANSPORTER MFS SUPERFAMILY"/>
    <property type="match status" value="1"/>
</dbReference>
<dbReference type="PANTHER" id="PTHR23521:SF2">
    <property type="entry name" value="TRANSPORTER MFS SUPERFAMILY"/>
    <property type="match status" value="1"/>
</dbReference>
<dbReference type="Pfam" id="PF07690">
    <property type="entry name" value="MFS_1"/>
    <property type="match status" value="1"/>
</dbReference>
<dbReference type="SUPFAM" id="SSF103473">
    <property type="entry name" value="MFS general substrate transporter"/>
    <property type="match status" value="1"/>
</dbReference>
<dbReference type="PROSITE" id="PS50850">
    <property type="entry name" value="MFS"/>
    <property type="match status" value="1"/>
</dbReference>
<accession>Q57R33</accession>
<reference key="1">
    <citation type="journal article" date="2005" name="Nucleic Acids Res.">
        <title>The genome sequence of Salmonella enterica serovar Choleraesuis, a highly invasive and resistant zoonotic pathogen.</title>
        <authorList>
            <person name="Chiu C.-H."/>
            <person name="Tang P."/>
            <person name="Chu C."/>
            <person name="Hu S."/>
            <person name="Bao Q."/>
            <person name="Yu J."/>
            <person name="Chou Y.-Y."/>
            <person name="Wang H.-S."/>
            <person name="Lee Y.-S."/>
        </authorList>
    </citation>
    <scope>NUCLEOTIDE SEQUENCE [LARGE SCALE GENOMIC DNA]</scope>
    <source>
        <strain>SC-B67</strain>
    </source>
</reference>
<name>YCAD_SALCH</name>